<gene>
    <name evidence="2" type="primary">tuf</name>
    <name type="ordered locus">CFPG_013</name>
</gene>
<protein>
    <recommendedName>
        <fullName evidence="2">Elongation factor Tu</fullName>
        <shortName evidence="2">EF-Tu</shortName>
        <ecNumber evidence="2">3.6.5.3</ecNumber>
    </recommendedName>
</protein>
<keyword id="KW-0963">Cytoplasm</keyword>
<keyword id="KW-0251">Elongation factor</keyword>
<keyword id="KW-0342">GTP-binding</keyword>
<keyword id="KW-0378">Hydrolase</keyword>
<keyword id="KW-0460">Magnesium</keyword>
<keyword id="KW-0479">Metal-binding</keyword>
<keyword id="KW-0547">Nucleotide-binding</keyword>
<keyword id="KW-0648">Protein biosynthesis</keyword>
<keyword id="KW-1185">Reference proteome</keyword>
<dbReference type="EC" id="3.6.5.3" evidence="2"/>
<dbReference type="EMBL" id="AP010656">
    <property type="protein sequence ID" value="BAG83276.1"/>
    <property type="molecule type" value="Genomic_DNA"/>
</dbReference>
<dbReference type="RefSeq" id="WP_012573037.1">
    <property type="nucleotide sequence ID" value="NC_011565.1"/>
</dbReference>
<dbReference type="SMR" id="B6YQ04"/>
<dbReference type="STRING" id="511995.CFPG_013"/>
<dbReference type="KEGG" id="aps:CFPG_013"/>
<dbReference type="eggNOG" id="COG0050">
    <property type="taxonomic scope" value="Bacteria"/>
</dbReference>
<dbReference type="HOGENOM" id="CLU_007265_0_0_10"/>
<dbReference type="OrthoDB" id="9804504at2"/>
<dbReference type="Proteomes" id="UP000000723">
    <property type="component" value="Chromosome"/>
</dbReference>
<dbReference type="GO" id="GO:0005829">
    <property type="term" value="C:cytosol"/>
    <property type="evidence" value="ECO:0007669"/>
    <property type="project" value="TreeGrafter"/>
</dbReference>
<dbReference type="GO" id="GO:0005525">
    <property type="term" value="F:GTP binding"/>
    <property type="evidence" value="ECO:0007669"/>
    <property type="project" value="UniProtKB-UniRule"/>
</dbReference>
<dbReference type="GO" id="GO:0003924">
    <property type="term" value="F:GTPase activity"/>
    <property type="evidence" value="ECO:0007669"/>
    <property type="project" value="InterPro"/>
</dbReference>
<dbReference type="GO" id="GO:0003746">
    <property type="term" value="F:translation elongation factor activity"/>
    <property type="evidence" value="ECO:0007669"/>
    <property type="project" value="UniProtKB-UniRule"/>
</dbReference>
<dbReference type="CDD" id="cd01884">
    <property type="entry name" value="EF_Tu"/>
    <property type="match status" value="1"/>
</dbReference>
<dbReference type="CDD" id="cd03697">
    <property type="entry name" value="EFTU_II"/>
    <property type="match status" value="1"/>
</dbReference>
<dbReference type="CDD" id="cd03707">
    <property type="entry name" value="EFTU_III"/>
    <property type="match status" value="1"/>
</dbReference>
<dbReference type="FunFam" id="2.40.30.10:FF:000001">
    <property type="entry name" value="Elongation factor Tu"/>
    <property type="match status" value="1"/>
</dbReference>
<dbReference type="FunFam" id="3.40.50.300:FF:000003">
    <property type="entry name" value="Elongation factor Tu"/>
    <property type="match status" value="1"/>
</dbReference>
<dbReference type="Gene3D" id="3.40.50.300">
    <property type="entry name" value="P-loop containing nucleotide triphosphate hydrolases"/>
    <property type="match status" value="1"/>
</dbReference>
<dbReference type="Gene3D" id="2.40.30.10">
    <property type="entry name" value="Translation factors"/>
    <property type="match status" value="2"/>
</dbReference>
<dbReference type="HAMAP" id="MF_00118_B">
    <property type="entry name" value="EF_Tu_B"/>
    <property type="match status" value="1"/>
</dbReference>
<dbReference type="InterPro" id="IPR041709">
    <property type="entry name" value="EF-Tu_GTP-bd"/>
</dbReference>
<dbReference type="InterPro" id="IPR050055">
    <property type="entry name" value="EF-Tu_GTPase"/>
</dbReference>
<dbReference type="InterPro" id="IPR004161">
    <property type="entry name" value="EFTu-like_2"/>
</dbReference>
<dbReference type="InterPro" id="IPR033720">
    <property type="entry name" value="EFTU_2"/>
</dbReference>
<dbReference type="InterPro" id="IPR031157">
    <property type="entry name" value="G_TR_CS"/>
</dbReference>
<dbReference type="InterPro" id="IPR027417">
    <property type="entry name" value="P-loop_NTPase"/>
</dbReference>
<dbReference type="InterPro" id="IPR005225">
    <property type="entry name" value="Small_GTP-bd"/>
</dbReference>
<dbReference type="InterPro" id="IPR000795">
    <property type="entry name" value="T_Tr_GTP-bd_dom"/>
</dbReference>
<dbReference type="InterPro" id="IPR009000">
    <property type="entry name" value="Transl_B-barrel_sf"/>
</dbReference>
<dbReference type="InterPro" id="IPR009001">
    <property type="entry name" value="Transl_elong_EF1A/Init_IF2_C"/>
</dbReference>
<dbReference type="InterPro" id="IPR004541">
    <property type="entry name" value="Transl_elong_EFTu/EF1A_bac/org"/>
</dbReference>
<dbReference type="InterPro" id="IPR004160">
    <property type="entry name" value="Transl_elong_EFTu/EF1A_C"/>
</dbReference>
<dbReference type="NCBIfam" id="TIGR00485">
    <property type="entry name" value="EF-Tu"/>
    <property type="match status" value="1"/>
</dbReference>
<dbReference type="NCBIfam" id="NF000766">
    <property type="entry name" value="PRK00049.1"/>
    <property type="match status" value="1"/>
</dbReference>
<dbReference type="NCBIfam" id="NF009372">
    <property type="entry name" value="PRK12735.1"/>
    <property type="match status" value="1"/>
</dbReference>
<dbReference type="NCBIfam" id="NF009373">
    <property type="entry name" value="PRK12736.1"/>
    <property type="match status" value="1"/>
</dbReference>
<dbReference type="NCBIfam" id="TIGR00231">
    <property type="entry name" value="small_GTP"/>
    <property type="match status" value="1"/>
</dbReference>
<dbReference type="PANTHER" id="PTHR43721:SF22">
    <property type="entry name" value="ELONGATION FACTOR TU, MITOCHONDRIAL"/>
    <property type="match status" value="1"/>
</dbReference>
<dbReference type="PANTHER" id="PTHR43721">
    <property type="entry name" value="ELONGATION FACTOR TU-RELATED"/>
    <property type="match status" value="1"/>
</dbReference>
<dbReference type="Pfam" id="PF00009">
    <property type="entry name" value="GTP_EFTU"/>
    <property type="match status" value="1"/>
</dbReference>
<dbReference type="Pfam" id="PF03144">
    <property type="entry name" value="GTP_EFTU_D2"/>
    <property type="match status" value="1"/>
</dbReference>
<dbReference type="Pfam" id="PF03143">
    <property type="entry name" value="GTP_EFTU_D3"/>
    <property type="match status" value="1"/>
</dbReference>
<dbReference type="PRINTS" id="PR00315">
    <property type="entry name" value="ELONGATNFCT"/>
</dbReference>
<dbReference type="SUPFAM" id="SSF50465">
    <property type="entry name" value="EF-Tu/eEF-1alpha/eIF2-gamma C-terminal domain"/>
    <property type="match status" value="1"/>
</dbReference>
<dbReference type="SUPFAM" id="SSF52540">
    <property type="entry name" value="P-loop containing nucleoside triphosphate hydrolases"/>
    <property type="match status" value="1"/>
</dbReference>
<dbReference type="SUPFAM" id="SSF50447">
    <property type="entry name" value="Translation proteins"/>
    <property type="match status" value="1"/>
</dbReference>
<dbReference type="PROSITE" id="PS00301">
    <property type="entry name" value="G_TR_1"/>
    <property type="match status" value="1"/>
</dbReference>
<dbReference type="PROSITE" id="PS51722">
    <property type="entry name" value="G_TR_2"/>
    <property type="match status" value="1"/>
</dbReference>
<reference key="1">
    <citation type="journal article" date="2008" name="Science">
        <title>Genome of an endosymbiont coupling N2 fixation to cellulolysis within RT protist cells in termite gut.</title>
        <authorList>
            <person name="Hongoh Y."/>
            <person name="Sharma V.K."/>
            <person name="Prakash T."/>
            <person name="Noda S."/>
            <person name="Toh H."/>
            <person name="Taylor T.D."/>
            <person name="Kudo T."/>
            <person name="Sakaki Y."/>
            <person name="Toyoda A."/>
            <person name="Hattori M."/>
            <person name="Ohkuma M."/>
        </authorList>
    </citation>
    <scope>NUCLEOTIDE SEQUENCE [LARGE SCALE GENOMIC DNA]</scope>
</reference>
<organism>
    <name type="scientific">Azobacteroides pseudotrichonymphae genomovar. CFP2</name>
    <dbReference type="NCBI Taxonomy" id="511995"/>
    <lineage>
        <taxon>Bacteria</taxon>
        <taxon>Pseudomonadati</taxon>
        <taxon>Bacteroidota</taxon>
        <taxon>Bacteroidia</taxon>
        <taxon>Bacteroidales</taxon>
        <taxon>Candidatus Azobacteroides</taxon>
    </lineage>
</organism>
<name>EFTU_AZOPC</name>
<sequence>MAKEKFNRSKPHVNIGTIGHVDHGKTTLTAAITAVLAKKGLSEVKSFDQIDNAPEEKERGITINTAHVEYETETRHYAHVDCPGHADYVKNMVTGAAQMDGAIIVVAATDGPMPQTREHILLARQVNVPKLVVFMNKVDIVDDPEMLELVEMEMRELLDFYQFDGTNTPIIRGSALGGANGDPKWEAKIMELMDAIDNWIPLPQRDIDKSFLMPVEDVFSITGRGTVATGRIETGLVRTGDEVQIIGLDANGKKSVVTGVEMFRKILDEGQAGDNVGLLLRGVDKDEVKRGMVITHPNKVKPHTKVKAEVYILKKEEGGRHTPFHNKYRPQFYVRTLDVTGEITLPEGTEMVMPGDNVTITIELIYPVACNEGLRFAIREGGRTVGAGQITEIIE</sequence>
<evidence type="ECO:0000250" key="1"/>
<evidence type="ECO:0000255" key="2">
    <source>
        <dbReference type="HAMAP-Rule" id="MF_00118"/>
    </source>
</evidence>
<feature type="chain" id="PRO_1000095048" description="Elongation factor Tu">
    <location>
        <begin position="1"/>
        <end position="395"/>
    </location>
</feature>
<feature type="domain" description="tr-type G">
    <location>
        <begin position="10"/>
        <end position="204"/>
    </location>
</feature>
<feature type="region of interest" description="G1" evidence="1">
    <location>
        <begin position="19"/>
        <end position="26"/>
    </location>
</feature>
<feature type="region of interest" description="G2" evidence="1">
    <location>
        <begin position="60"/>
        <end position="64"/>
    </location>
</feature>
<feature type="region of interest" description="G3" evidence="1">
    <location>
        <begin position="81"/>
        <end position="84"/>
    </location>
</feature>
<feature type="region of interest" description="G4" evidence="1">
    <location>
        <begin position="136"/>
        <end position="139"/>
    </location>
</feature>
<feature type="region of interest" description="G5" evidence="1">
    <location>
        <begin position="174"/>
        <end position="176"/>
    </location>
</feature>
<feature type="binding site" evidence="2">
    <location>
        <begin position="19"/>
        <end position="26"/>
    </location>
    <ligand>
        <name>GTP</name>
        <dbReference type="ChEBI" id="CHEBI:37565"/>
    </ligand>
</feature>
<feature type="binding site" evidence="2">
    <location>
        <position position="26"/>
    </location>
    <ligand>
        <name>Mg(2+)</name>
        <dbReference type="ChEBI" id="CHEBI:18420"/>
    </ligand>
</feature>
<feature type="binding site" evidence="2">
    <location>
        <begin position="81"/>
        <end position="85"/>
    </location>
    <ligand>
        <name>GTP</name>
        <dbReference type="ChEBI" id="CHEBI:37565"/>
    </ligand>
</feature>
<feature type="binding site" evidence="2">
    <location>
        <begin position="136"/>
        <end position="139"/>
    </location>
    <ligand>
        <name>GTP</name>
        <dbReference type="ChEBI" id="CHEBI:37565"/>
    </ligand>
</feature>
<comment type="function">
    <text evidence="2">GTP hydrolase that promotes the GTP-dependent binding of aminoacyl-tRNA to the A-site of ribosomes during protein biosynthesis.</text>
</comment>
<comment type="catalytic activity">
    <reaction evidence="2">
        <text>GTP + H2O = GDP + phosphate + H(+)</text>
        <dbReference type="Rhea" id="RHEA:19669"/>
        <dbReference type="ChEBI" id="CHEBI:15377"/>
        <dbReference type="ChEBI" id="CHEBI:15378"/>
        <dbReference type="ChEBI" id="CHEBI:37565"/>
        <dbReference type="ChEBI" id="CHEBI:43474"/>
        <dbReference type="ChEBI" id="CHEBI:58189"/>
        <dbReference type="EC" id="3.6.5.3"/>
    </reaction>
    <physiologicalReaction direction="left-to-right" evidence="2">
        <dbReference type="Rhea" id="RHEA:19670"/>
    </physiologicalReaction>
</comment>
<comment type="subunit">
    <text evidence="2">Monomer.</text>
</comment>
<comment type="subcellular location">
    <subcellularLocation>
        <location evidence="2">Cytoplasm</location>
    </subcellularLocation>
</comment>
<comment type="similarity">
    <text evidence="2">Belongs to the TRAFAC class translation factor GTPase superfamily. Classic translation factor GTPase family. EF-Tu/EF-1A subfamily.</text>
</comment>
<accession>B6YQ04</accession>
<proteinExistence type="inferred from homology"/>